<proteinExistence type="inferred from homology"/>
<sequence>MSEAEARPTNFIRQIIDEDLASGKHTTVHTRFPPEPNGYLHIGHAKSICLNFGIAQDYKGQCNLRFDDTNPVKEDIEYVDSIKNDVEWLGFHWSGNVRYSSDYFDQLHAYAIELINKGLAYVDELTPEQIREYRGTLTQPGKNSPYRDRSVEENLALFEKMRTGGFEEGKACLRAKIDMASPFIVMRDPVLYRIKFAEHHQTGNKWCIYPMYDFTHCISDALEGITHSLCTLEFQDNRRLYDWVLDNITIPVHPRQYEFSRLNLEYTVMSKRKLNLLVTDKHVEGWDDPRMPTISGLRRRGYTAASIREFCKRIGVTKQDNTIEMASLESCIREDLNENAPRAMAVIDPVKLVIENYQGEGEMVTMPNHPNKPEMGSRQVPFSGEIWIDRSDFREEANKQYKRLVLGKEVRLRNAYVIKAERVEKDAEGNITTIFCTYDADTLSKDPADGRKVKGVIHWVSAAHALPVEIRLYDRLFSVPNPGAADDFLSVINPESLVIKQGFAEPSLKDAVAGKAFQFEREGYFCLDSRHSTAEKPVFNRTVGLRDTWAKVGE</sequence>
<evidence type="ECO:0000255" key="1">
    <source>
        <dbReference type="HAMAP-Rule" id="MF_00126"/>
    </source>
</evidence>
<gene>
    <name evidence="1" type="primary">glnS</name>
    <name type="ordered locus">ECH74115_0773</name>
</gene>
<keyword id="KW-0030">Aminoacyl-tRNA synthetase</keyword>
<keyword id="KW-0067">ATP-binding</keyword>
<keyword id="KW-0963">Cytoplasm</keyword>
<keyword id="KW-0436">Ligase</keyword>
<keyword id="KW-0547">Nucleotide-binding</keyword>
<keyword id="KW-0648">Protein biosynthesis</keyword>
<accession>B5YQM4</accession>
<reference key="1">
    <citation type="journal article" date="2011" name="Proc. Natl. Acad. Sci. U.S.A.">
        <title>Genomic anatomy of Escherichia coli O157:H7 outbreaks.</title>
        <authorList>
            <person name="Eppinger M."/>
            <person name="Mammel M.K."/>
            <person name="Leclerc J.E."/>
            <person name="Ravel J."/>
            <person name="Cebula T.A."/>
        </authorList>
    </citation>
    <scope>NUCLEOTIDE SEQUENCE [LARGE SCALE GENOMIC DNA]</scope>
    <source>
        <strain>EC4115 / EHEC</strain>
    </source>
</reference>
<feature type="chain" id="PRO_1000095488" description="Glutamine--tRNA ligase">
    <location>
        <begin position="1"/>
        <end position="554"/>
    </location>
</feature>
<feature type="region of interest" description="Interaction with tRNA" evidence="1">
    <location>
        <begin position="317"/>
        <end position="324"/>
    </location>
</feature>
<feature type="short sequence motif" description="'HIGH' region" evidence="1">
    <location>
        <begin position="34"/>
        <end position="44"/>
    </location>
</feature>
<feature type="short sequence motif" description="'KMSKS' region" evidence="1">
    <location>
        <begin position="268"/>
        <end position="272"/>
    </location>
</feature>
<feature type="binding site" evidence="1">
    <location>
        <begin position="35"/>
        <end position="37"/>
    </location>
    <ligand>
        <name>ATP</name>
        <dbReference type="ChEBI" id="CHEBI:30616"/>
    </ligand>
</feature>
<feature type="binding site" evidence="1">
    <location>
        <begin position="41"/>
        <end position="47"/>
    </location>
    <ligand>
        <name>ATP</name>
        <dbReference type="ChEBI" id="CHEBI:30616"/>
    </ligand>
</feature>
<feature type="binding site" evidence="1">
    <location>
        <position position="67"/>
    </location>
    <ligand>
        <name>L-glutamine</name>
        <dbReference type="ChEBI" id="CHEBI:58359"/>
    </ligand>
</feature>
<feature type="binding site" evidence="1">
    <location>
        <position position="212"/>
    </location>
    <ligand>
        <name>L-glutamine</name>
        <dbReference type="ChEBI" id="CHEBI:58359"/>
    </ligand>
</feature>
<feature type="binding site" evidence="1">
    <location>
        <position position="231"/>
    </location>
    <ligand>
        <name>ATP</name>
        <dbReference type="ChEBI" id="CHEBI:30616"/>
    </ligand>
</feature>
<feature type="binding site" evidence="1">
    <location>
        <begin position="261"/>
        <end position="262"/>
    </location>
    <ligand>
        <name>ATP</name>
        <dbReference type="ChEBI" id="CHEBI:30616"/>
    </ligand>
</feature>
<feature type="binding site" evidence="1">
    <location>
        <begin position="269"/>
        <end position="271"/>
    </location>
    <ligand>
        <name>ATP</name>
        <dbReference type="ChEBI" id="CHEBI:30616"/>
    </ligand>
</feature>
<organism>
    <name type="scientific">Escherichia coli O157:H7 (strain EC4115 / EHEC)</name>
    <dbReference type="NCBI Taxonomy" id="444450"/>
    <lineage>
        <taxon>Bacteria</taxon>
        <taxon>Pseudomonadati</taxon>
        <taxon>Pseudomonadota</taxon>
        <taxon>Gammaproteobacteria</taxon>
        <taxon>Enterobacterales</taxon>
        <taxon>Enterobacteriaceae</taxon>
        <taxon>Escherichia</taxon>
    </lineage>
</organism>
<dbReference type="EC" id="6.1.1.18" evidence="1"/>
<dbReference type="EMBL" id="CP001164">
    <property type="protein sequence ID" value="ACI37757.1"/>
    <property type="molecule type" value="Genomic_DNA"/>
</dbReference>
<dbReference type="RefSeq" id="WP_001287136.1">
    <property type="nucleotide sequence ID" value="NC_011353.1"/>
</dbReference>
<dbReference type="SMR" id="B5YQM4"/>
<dbReference type="KEGG" id="ecf:ECH74115_0773"/>
<dbReference type="HOGENOM" id="CLU_001882_2_3_6"/>
<dbReference type="GO" id="GO:0005829">
    <property type="term" value="C:cytosol"/>
    <property type="evidence" value="ECO:0007669"/>
    <property type="project" value="TreeGrafter"/>
</dbReference>
<dbReference type="GO" id="GO:0005524">
    <property type="term" value="F:ATP binding"/>
    <property type="evidence" value="ECO:0007669"/>
    <property type="project" value="UniProtKB-UniRule"/>
</dbReference>
<dbReference type="GO" id="GO:0004819">
    <property type="term" value="F:glutamine-tRNA ligase activity"/>
    <property type="evidence" value="ECO:0007669"/>
    <property type="project" value="UniProtKB-UniRule"/>
</dbReference>
<dbReference type="GO" id="GO:0006425">
    <property type="term" value="P:glutaminyl-tRNA aminoacylation"/>
    <property type="evidence" value="ECO:0007669"/>
    <property type="project" value="InterPro"/>
</dbReference>
<dbReference type="GO" id="GO:0006424">
    <property type="term" value="P:glutamyl-tRNA aminoacylation"/>
    <property type="evidence" value="ECO:0007669"/>
    <property type="project" value="UniProtKB-UniRule"/>
</dbReference>
<dbReference type="CDD" id="cd00807">
    <property type="entry name" value="GlnRS_core"/>
    <property type="match status" value="1"/>
</dbReference>
<dbReference type="FunFam" id="1.10.1160.10:FF:000001">
    <property type="entry name" value="Glutamine--tRNA ligase"/>
    <property type="match status" value="1"/>
</dbReference>
<dbReference type="FunFam" id="2.40.240.10:FF:000001">
    <property type="entry name" value="Glutamine--tRNA ligase"/>
    <property type="match status" value="1"/>
</dbReference>
<dbReference type="FunFam" id="2.40.240.10:FF:000003">
    <property type="entry name" value="Glutamine--tRNA ligase"/>
    <property type="match status" value="1"/>
</dbReference>
<dbReference type="FunFam" id="3.90.800.10:FF:000001">
    <property type="entry name" value="Glutamine--tRNA ligase"/>
    <property type="match status" value="1"/>
</dbReference>
<dbReference type="FunFam" id="3.40.50.620:FF:000037">
    <property type="entry name" value="Glutamine--tRNA ligase cytoplasmic"/>
    <property type="match status" value="1"/>
</dbReference>
<dbReference type="Gene3D" id="1.10.1160.10">
    <property type="entry name" value="Glutamyl-trna Synthetase, Domain 2"/>
    <property type="match status" value="1"/>
</dbReference>
<dbReference type="Gene3D" id="3.90.800.10">
    <property type="entry name" value="Glutamyl-tRNA Synthetase, Domain 3"/>
    <property type="match status" value="1"/>
</dbReference>
<dbReference type="Gene3D" id="3.40.50.620">
    <property type="entry name" value="HUPs"/>
    <property type="match status" value="1"/>
</dbReference>
<dbReference type="Gene3D" id="2.40.240.10">
    <property type="entry name" value="Ribosomal Protein L25, Chain P"/>
    <property type="match status" value="2"/>
</dbReference>
<dbReference type="HAMAP" id="MF_00126">
    <property type="entry name" value="Gln_tRNA_synth"/>
    <property type="match status" value="1"/>
</dbReference>
<dbReference type="InterPro" id="IPR001412">
    <property type="entry name" value="aa-tRNA-synth_I_CS"/>
</dbReference>
<dbReference type="InterPro" id="IPR004514">
    <property type="entry name" value="Gln-tRNA-synth"/>
</dbReference>
<dbReference type="InterPro" id="IPR050132">
    <property type="entry name" value="Gln/Glu-tRNA_Ligase"/>
</dbReference>
<dbReference type="InterPro" id="IPR022861">
    <property type="entry name" value="Gln_tRNA_ligase_bac"/>
</dbReference>
<dbReference type="InterPro" id="IPR000924">
    <property type="entry name" value="Glu/Gln-tRNA-synth"/>
</dbReference>
<dbReference type="InterPro" id="IPR020058">
    <property type="entry name" value="Glu/Gln-tRNA-synth_Ib_cat-dom"/>
</dbReference>
<dbReference type="InterPro" id="IPR020059">
    <property type="entry name" value="Glu/Gln-tRNA-synth_Ib_codon-bd"/>
</dbReference>
<dbReference type="InterPro" id="IPR020061">
    <property type="entry name" value="Glu_tRNA_lig_a-bdl"/>
</dbReference>
<dbReference type="InterPro" id="IPR020056">
    <property type="entry name" value="Rbsml_bL25/Gln-tRNA_synth_N"/>
</dbReference>
<dbReference type="InterPro" id="IPR011035">
    <property type="entry name" value="Ribosomal_bL25/Gln-tRNA_synth"/>
</dbReference>
<dbReference type="InterPro" id="IPR014729">
    <property type="entry name" value="Rossmann-like_a/b/a_fold"/>
</dbReference>
<dbReference type="InterPro" id="IPR049437">
    <property type="entry name" value="tRNA-synt_1c_C2"/>
</dbReference>
<dbReference type="NCBIfam" id="TIGR00440">
    <property type="entry name" value="glnS"/>
    <property type="match status" value="1"/>
</dbReference>
<dbReference type="NCBIfam" id="NF011291">
    <property type="entry name" value="PRK14703.1"/>
    <property type="match status" value="1"/>
</dbReference>
<dbReference type="PANTHER" id="PTHR43097:SF5">
    <property type="entry name" value="GLUTAMATE--TRNA LIGASE"/>
    <property type="match status" value="1"/>
</dbReference>
<dbReference type="PANTHER" id="PTHR43097">
    <property type="entry name" value="GLUTAMINE-TRNA LIGASE"/>
    <property type="match status" value="1"/>
</dbReference>
<dbReference type="Pfam" id="PF00749">
    <property type="entry name" value="tRNA-synt_1c"/>
    <property type="match status" value="1"/>
</dbReference>
<dbReference type="Pfam" id="PF03950">
    <property type="entry name" value="tRNA-synt_1c_C"/>
    <property type="match status" value="1"/>
</dbReference>
<dbReference type="Pfam" id="PF20974">
    <property type="entry name" value="tRNA-synt_1c_C2"/>
    <property type="match status" value="1"/>
</dbReference>
<dbReference type="PRINTS" id="PR00987">
    <property type="entry name" value="TRNASYNTHGLU"/>
</dbReference>
<dbReference type="SUPFAM" id="SSF52374">
    <property type="entry name" value="Nucleotidylyl transferase"/>
    <property type="match status" value="1"/>
</dbReference>
<dbReference type="SUPFAM" id="SSF50715">
    <property type="entry name" value="Ribosomal protein L25-like"/>
    <property type="match status" value="1"/>
</dbReference>
<dbReference type="PROSITE" id="PS00178">
    <property type="entry name" value="AA_TRNA_LIGASE_I"/>
    <property type="match status" value="1"/>
</dbReference>
<comment type="catalytic activity">
    <reaction evidence="1">
        <text>tRNA(Gln) + L-glutamine + ATP = L-glutaminyl-tRNA(Gln) + AMP + diphosphate</text>
        <dbReference type="Rhea" id="RHEA:20121"/>
        <dbReference type="Rhea" id="RHEA-COMP:9662"/>
        <dbReference type="Rhea" id="RHEA-COMP:9681"/>
        <dbReference type="ChEBI" id="CHEBI:30616"/>
        <dbReference type="ChEBI" id="CHEBI:33019"/>
        <dbReference type="ChEBI" id="CHEBI:58359"/>
        <dbReference type="ChEBI" id="CHEBI:78442"/>
        <dbReference type="ChEBI" id="CHEBI:78521"/>
        <dbReference type="ChEBI" id="CHEBI:456215"/>
        <dbReference type="EC" id="6.1.1.18"/>
    </reaction>
</comment>
<comment type="subunit">
    <text evidence="1">Monomer.</text>
</comment>
<comment type="subcellular location">
    <subcellularLocation>
        <location evidence="1">Cytoplasm</location>
    </subcellularLocation>
</comment>
<comment type="similarity">
    <text evidence="1">Belongs to the class-I aminoacyl-tRNA synthetase family.</text>
</comment>
<protein>
    <recommendedName>
        <fullName evidence="1">Glutamine--tRNA ligase</fullName>
        <ecNumber evidence="1">6.1.1.18</ecNumber>
    </recommendedName>
    <alternativeName>
        <fullName evidence="1">Glutaminyl-tRNA synthetase</fullName>
        <shortName evidence="1">GlnRS</shortName>
    </alternativeName>
</protein>
<name>SYQ_ECO5E</name>